<name>CWP12_SOLLC</name>
<dbReference type="InParanoid" id="P80809"/>
<dbReference type="Proteomes" id="UP000004994">
    <property type="component" value="Unplaced"/>
</dbReference>
<dbReference type="GO" id="GO:0005576">
    <property type="term" value="C:extracellular region"/>
    <property type="evidence" value="ECO:0007669"/>
    <property type="project" value="UniProtKB-KW"/>
</dbReference>
<reference evidence="3" key="1">
    <citation type="journal article" date="1997" name="J. Biol. Chem.">
        <title>Differential extraction and protein sequencing reveals major differences in patterns of primary cell wall proteins from plants.</title>
        <authorList>
            <person name="Robertson D."/>
            <person name="Mitchell G.P."/>
            <person name="Gilroy J.S."/>
            <person name="Gerrish C."/>
            <person name="Bolwell G.P."/>
            <person name="Slabas A.R."/>
        </authorList>
    </citation>
    <scope>PROTEIN SEQUENCE</scope>
    <scope>SUBCELLULAR LOCATION</scope>
</reference>
<feature type="chain" id="PRO_0000079666" description="27 kDa cell wall protein">
    <location>
        <begin position="1"/>
        <end position="13" status="greater than"/>
    </location>
</feature>
<feature type="non-terminal residue" evidence="2">
    <location>
        <position position="13"/>
    </location>
</feature>
<proteinExistence type="evidence at protein level"/>
<protein>
    <recommendedName>
        <fullName>27 kDa cell wall protein</fullName>
    </recommendedName>
</protein>
<evidence type="ECO:0000269" key="1">
    <source>
    </source>
</evidence>
<evidence type="ECO:0000303" key="2">
    <source>
    </source>
</evidence>
<evidence type="ECO:0000305" key="3"/>
<sequence>TGVNYGQLGNNLP</sequence>
<organism>
    <name type="scientific">Solanum lycopersicum</name>
    <name type="common">Tomato</name>
    <name type="synonym">Lycopersicon esculentum</name>
    <dbReference type="NCBI Taxonomy" id="4081"/>
    <lineage>
        <taxon>Eukaryota</taxon>
        <taxon>Viridiplantae</taxon>
        <taxon>Streptophyta</taxon>
        <taxon>Embryophyta</taxon>
        <taxon>Tracheophyta</taxon>
        <taxon>Spermatophyta</taxon>
        <taxon>Magnoliopsida</taxon>
        <taxon>eudicotyledons</taxon>
        <taxon>Gunneridae</taxon>
        <taxon>Pentapetalae</taxon>
        <taxon>asterids</taxon>
        <taxon>lamiids</taxon>
        <taxon>Solanales</taxon>
        <taxon>Solanaceae</taxon>
        <taxon>Solanoideae</taxon>
        <taxon>Solaneae</taxon>
        <taxon>Solanum</taxon>
        <taxon>Solanum subgen. Lycopersicon</taxon>
    </lineage>
</organism>
<keyword id="KW-0134">Cell wall</keyword>
<keyword id="KW-0903">Direct protein sequencing</keyword>
<keyword id="KW-1185">Reference proteome</keyword>
<keyword id="KW-0964">Secreted</keyword>
<comment type="subcellular location">
    <subcellularLocation>
        <location evidence="1">Secreted</location>
        <location evidence="1">Cell wall</location>
    </subcellularLocation>
</comment>
<accession>P80809</accession>